<accession>A4FK76</accession>
<evidence type="ECO:0000255" key="1">
    <source>
        <dbReference type="HAMAP-Rule" id="MF_00202"/>
    </source>
</evidence>
<keyword id="KW-0963">Cytoplasm</keyword>
<keyword id="KW-0413">Isomerase</keyword>
<keyword id="KW-0414">Isoprene biosynthesis</keyword>
<keyword id="KW-0460">Magnesium</keyword>
<keyword id="KW-0464">Manganese</keyword>
<keyword id="KW-0479">Metal-binding</keyword>
<keyword id="KW-1185">Reference proteome</keyword>
<protein>
    <recommendedName>
        <fullName evidence="1">Isopentenyl-diphosphate Delta-isomerase</fullName>
        <shortName evidence="1">IPP isomerase</shortName>
        <ecNumber evidence="1">5.3.3.2</ecNumber>
    </recommendedName>
    <alternativeName>
        <fullName evidence="1">IPP:DMAPP isomerase</fullName>
    </alternativeName>
    <alternativeName>
        <fullName evidence="1">Isopentenyl pyrophosphate isomerase</fullName>
    </alternativeName>
</protein>
<gene>
    <name evidence="1" type="primary">idi</name>
    <name type="ordered locus">SACE_5210</name>
</gene>
<feature type="chain" id="PRO_0000325219" description="Isopentenyl-diphosphate Delta-isomerase">
    <location>
        <begin position="1"/>
        <end position="194"/>
    </location>
</feature>
<feature type="domain" description="Nudix hydrolase">
    <location>
        <begin position="28"/>
        <end position="162"/>
    </location>
</feature>
<feature type="active site" evidence="1">
    <location>
        <position position="65"/>
    </location>
</feature>
<feature type="active site" evidence="1">
    <location>
        <position position="114"/>
    </location>
</feature>
<feature type="binding site" evidence="1">
    <location>
        <position position="23"/>
    </location>
    <ligand>
        <name>Mn(2+)</name>
        <dbReference type="ChEBI" id="CHEBI:29035"/>
    </ligand>
</feature>
<feature type="binding site" evidence="1">
    <location>
        <position position="30"/>
    </location>
    <ligand>
        <name>Mn(2+)</name>
        <dbReference type="ChEBI" id="CHEBI:29035"/>
    </ligand>
</feature>
<feature type="binding site" evidence="1">
    <location>
        <position position="67"/>
    </location>
    <ligand>
        <name>Mn(2+)</name>
        <dbReference type="ChEBI" id="CHEBI:29035"/>
    </ligand>
</feature>
<feature type="binding site" evidence="1">
    <location>
        <position position="85"/>
    </location>
    <ligand>
        <name>Mg(2+)</name>
        <dbReference type="ChEBI" id="CHEBI:18420"/>
    </ligand>
</feature>
<feature type="binding site" evidence="1">
    <location>
        <position position="112"/>
    </location>
    <ligand>
        <name>Mn(2+)</name>
        <dbReference type="ChEBI" id="CHEBI:29035"/>
    </ligand>
</feature>
<feature type="binding site" evidence="1">
    <location>
        <position position="114"/>
    </location>
    <ligand>
        <name>Mn(2+)</name>
        <dbReference type="ChEBI" id="CHEBI:29035"/>
    </ligand>
</feature>
<comment type="function">
    <text evidence="1">Catalyzes the 1,3-allylic rearrangement of the homoallylic substrate isopentenyl (IPP) to its highly electrophilic allylic isomer, dimethylallyl diphosphate (DMAPP).</text>
</comment>
<comment type="catalytic activity">
    <reaction evidence="1">
        <text>isopentenyl diphosphate = dimethylallyl diphosphate</text>
        <dbReference type="Rhea" id="RHEA:23284"/>
        <dbReference type="ChEBI" id="CHEBI:57623"/>
        <dbReference type="ChEBI" id="CHEBI:128769"/>
        <dbReference type="EC" id="5.3.3.2"/>
    </reaction>
</comment>
<comment type="cofactor">
    <cofactor evidence="1">
        <name>Mg(2+)</name>
        <dbReference type="ChEBI" id="CHEBI:18420"/>
    </cofactor>
    <text evidence="1">Binds 1 Mg(2+) ion per subunit. The magnesium ion binds only when substrate is bound.</text>
</comment>
<comment type="cofactor">
    <cofactor evidence="1">
        <name>Mn(2+)</name>
        <dbReference type="ChEBI" id="CHEBI:29035"/>
    </cofactor>
    <text evidence="1">Binds 1 Mn(2+) ion per subunit.</text>
</comment>
<comment type="pathway">
    <text evidence="1">Isoprenoid biosynthesis; dimethylallyl diphosphate biosynthesis; dimethylallyl diphosphate from isopentenyl diphosphate: step 1/1.</text>
</comment>
<comment type="subcellular location">
    <subcellularLocation>
        <location evidence="1">Cytoplasm</location>
    </subcellularLocation>
</comment>
<comment type="similarity">
    <text evidence="1">Belongs to the IPP isomerase type 1 family.</text>
</comment>
<name>IDI_SACEN</name>
<proteinExistence type="inferred from homology"/>
<organism>
    <name type="scientific">Saccharopolyspora erythraea (strain ATCC 11635 / DSM 40517 / JCM 4748 / NBRC 13426 / NCIMB 8594 / NRRL 2338)</name>
    <dbReference type="NCBI Taxonomy" id="405948"/>
    <lineage>
        <taxon>Bacteria</taxon>
        <taxon>Bacillati</taxon>
        <taxon>Actinomycetota</taxon>
        <taxon>Actinomycetes</taxon>
        <taxon>Pseudonocardiales</taxon>
        <taxon>Pseudonocardiaceae</taxon>
        <taxon>Saccharopolyspora</taxon>
    </lineage>
</organism>
<dbReference type="EC" id="5.3.3.2" evidence="1"/>
<dbReference type="EMBL" id="AM420293">
    <property type="protein sequence ID" value="CAM04451.1"/>
    <property type="molecule type" value="Genomic_DNA"/>
</dbReference>
<dbReference type="RefSeq" id="WP_009942407.1">
    <property type="nucleotide sequence ID" value="NC_009142.1"/>
</dbReference>
<dbReference type="SMR" id="A4FK76"/>
<dbReference type="STRING" id="405948.SACE_5210"/>
<dbReference type="KEGG" id="sen:SACE_5210"/>
<dbReference type="eggNOG" id="COG1443">
    <property type="taxonomic scope" value="Bacteria"/>
</dbReference>
<dbReference type="HOGENOM" id="CLU_060552_2_0_11"/>
<dbReference type="OrthoDB" id="9809458at2"/>
<dbReference type="UniPathway" id="UPA00059">
    <property type="reaction ID" value="UER00104"/>
</dbReference>
<dbReference type="Proteomes" id="UP000006728">
    <property type="component" value="Chromosome"/>
</dbReference>
<dbReference type="GO" id="GO:0005737">
    <property type="term" value="C:cytoplasm"/>
    <property type="evidence" value="ECO:0007669"/>
    <property type="project" value="UniProtKB-SubCell"/>
</dbReference>
<dbReference type="GO" id="GO:0004452">
    <property type="term" value="F:isopentenyl-diphosphate delta-isomerase activity"/>
    <property type="evidence" value="ECO:0007669"/>
    <property type="project" value="UniProtKB-UniRule"/>
</dbReference>
<dbReference type="GO" id="GO:0046872">
    <property type="term" value="F:metal ion binding"/>
    <property type="evidence" value="ECO:0007669"/>
    <property type="project" value="UniProtKB-KW"/>
</dbReference>
<dbReference type="GO" id="GO:0050992">
    <property type="term" value="P:dimethylallyl diphosphate biosynthetic process"/>
    <property type="evidence" value="ECO:0007669"/>
    <property type="project" value="UniProtKB-UniRule"/>
</dbReference>
<dbReference type="GO" id="GO:0008299">
    <property type="term" value="P:isoprenoid biosynthetic process"/>
    <property type="evidence" value="ECO:0007669"/>
    <property type="project" value="UniProtKB-KW"/>
</dbReference>
<dbReference type="CDD" id="cd02885">
    <property type="entry name" value="NUDIX_IPP_Isomerase"/>
    <property type="match status" value="1"/>
</dbReference>
<dbReference type="FunFam" id="3.90.79.10:FF:000009">
    <property type="entry name" value="Isopentenyl-diphosphate Delta-isomerase"/>
    <property type="match status" value="1"/>
</dbReference>
<dbReference type="Gene3D" id="3.90.79.10">
    <property type="entry name" value="Nucleoside Triphosphate Pyrophosphohydrolase"/>
    <property type="match status" value="1"/>
</dbReference>
<dbReference type="HAMAP" id="MF_00202">
    <property type="entry name" value="Idi"/>
    <property type="match status" value="1"/>
</dbReference>
<dbReference type="InterPro" id="IPR056375">
    <property type="entry name" value="Idi_bact"/>
</dbReference>
<dbReference type="InterPro" id="IPR011876">
    <property type="entry name" value="IsopentenylPP_isomerase_typ1"/>
</dbReference>
<dbReference type="InterPro" id="IPR015797">
    <property type="entry name" value="NUDIX_hydrolase-like_dom_sf"/>
</dbReference>
<dbReference type="InterPro" id="IPR000086">
    <property type="entry name" value="NUDIX_hydrolase_dom"/>
</dbReference>
<dbReference type="NCBIfam" id="TIGR02150">
    <property type="entry name" value="IPP_isom_1"/>
    <property type="match status" value="1"/>
</dbReference>
<dbReference type="NCBIfam" id="NF002995">
    <property type="entry name" value="PRK03759.1"/>
    <property type="match status" value="1"/>
</dbReference>
<dbReference type="PANTHER" id="PTHR10885">
    <property type="entry name" value="ISOPENTENYL-DIPHOSPHATE DELTA-ISOMERASE"/>
    <property type="match status" value="1"/>
</dbReference>
<dbReference type="PANTHER" id="PTHR10885:SF0">
    <property type="entry name" value="ISOPENTENYL-DIPHOSPHATE DELTA-ISOMERASE"/>
    <property type="match status" value="1"/>
</dbReference>
<dbReference type="Pfam" id="PF00293">
    <property type="entry name" value="NUDIX"/>
    <property type="match status" value="1"/>
</dbReference>
<dbReference type="PIRSF" id="PIRSF018427">
    <property type="entry name" value="Isopntndiph_ism"/>
    <property type="match status" value="1"/>
</dbReference>
<dbReference type="SUPFAM" id="SSF55811">
    <property type="entry name" value="Nudix"/>
    <property type="match status" value="1"/>
</dbReference>
<dbReference type="PROSITE" id="PS51462">
    <property type="entry name" value="NUDIX"/>
    <property type="match status" value="1"/>
</dbReference>
<sequence>MEQVVLLNDSGQAIGVTDKATVHHLDTPLHLAFSCYVFNGRGQLLLTQRAHEKRTWPGVWTNTCCGHPAPQEAMPEAITRRLGEELGLTVRDLTLVLPRFRYRAVMGNGVVENEICPVFAAFTDDEPAPNREEVAGTAWADWSGFSAEVLAGTTDISPWCRQQVAELVELGANPAEWPAADPADLPDAAVIAAG</sequence>
<reference key="1">
    <citation type="journal article" date="2007" name="Nat. Biotechnol.">
        <title>Complete genome sequence of the erythromycin-producing bacterium Saccharopolyspora erythraea NRRL23338.</title>
        <authorList>
            <person name="Oliynyk M."/>
            <person name="Samborskyy M."/>
            <person name="Lester J.B."/>
            <person name="Mironenko T."/>
            <person name="Scott N."/>
            <person name="Dickens S."/>
            <person name="Haydock S.F."/>
            <person name="Leadlay P.F."/>
        </authorList>
    </citation>
    <scope>NUCLEOTIDE SEQUENCE [LARGE SCALE GENOMIC DNA]</scope>
    <source>
        <strain>ATCC 11635 / DSM 40517 / JCM 4748 / NBRC 13426 / NCIMB 8594 / NRRL 2338</strain>
    </source>
</reference>